<organism>
    <name type="scientific">Loxosceles deserta</name>
    <name type="common">Desert recluse spider</name>
    <dbReference type="NCBI Taxonomy" id="424440"/>
    <lineage>
        <taxon>Eukaryota</taxon>
        <taxon>Metazoa</taxon>
        <taxon>Ecdysozoa</taxon>
        <taxon>Arthropoda</taxon>
        <taxon>Chelicerata</taxon>
        <taxon>Arachnida</taxon>
        <taxon>Araneae</taxon>
        <taxon>Araneomorphae</taxon>
        <taxon>Haplogynae</taxon>
        <taxon>Scytodoidea</taxon>
        <taxon>Sicariidae</taxon>
        <taxon>Loxosceles</taxon>
    </lineage>
</organism>
<reference key="1">
    <citation type="journal article" date="2009" name="Mol. Biol. Evol.">
        <title>Molecular evolution, functional variation, and proposed nomenclature of the gene family that includes sphingomyelinase D in sicariid spider venoms.</title>
        <authorList>
            <person name="Binford G.J."/>
            <person name="Bodner M.R."/>
            <person name="Cordes M.H."/>
            <person name="Baldwin K.L."/>
            <person name="Rynerson M.R."/>
            <person name="Burns S.N."/>
            <person name="Zobel-Thropp P.A."/>
        </authorList>
    </citation>
    <scope>NUCLEOTIDE SEQUENCE [MRNA]</scope>
    <scope>NOMENCLATURE</scope>
    <source>
        <tissue>Venom gland</tissue>
    </source>
</reference>
<feature type="chain" id="PRO_0000392778" description="Dermonecrotic toxin LdSicTox-alphaIB1av">
    <location>
        <begin position="1" status="less than"/>
        <end position="273"/>
    </location>
</feature>
<feature type="active site" evidence="5">
    <location>
        <position position="5"/>
    </location>
</feature>
<feature type="active site" description="Nucleophile" evidence="5">
    <location>
        <position position="41"/>
    </location>
</feature>
<feature type="binding site" evidence="5">
    <location>
        <position position="25"/>
    </location>
    <ligand>
        <name>Mg(2+)</name>
        <dbReference type="ChEBI" id="CHEBI:18420"/>
    </ligand>
</feature>
<feature type="binding site" evidence="5">
    <location>
        <position position="27"/>
    </location>
    <ligand>
        <name>Mg(2+)</name>
        <dbReference type="ChEBI" id="CHEBI:18420"/>
    </ligand>
</feature>
<feature type="binding site" evidence="5">
    <location>
        <position position="85"/>
    </location>
    <ligand>
        <name>Mg(2+)</name>
        <dbReference type="ChEBI" id="CHEBI:18420"/>
    </ligand>
</feature>
<feature type="glycosylation site" description="N-linked (GlcNAc...) asparagine" evidence="6">
    <location>
        <position position="250"/>
    </location>
</feature>
<feature type="disulfide bond" evidence="3">
    <location>
        <begin position="45"/>
        <end position="51"/>
    </location>
</feature>
<feature type="disulfide bond" evidence="3">
    <location>
        <begin position="47"/>
        <end position="190"/>
    </location>
</feature>
<feature type="non-terminal residue">
    <location>
        <position position="1"/>
    </location>
</feature>
<keyword id="KW-0204">Cytolysis</keyword>
<keyword id="KW-1061">Dermonecrotic toxin</keyword>
<keyword id="KW-1015">Disulfide bond</keyword>
<keyword id="KW-0325">Glycoprotein</keyword>
<keyword id="KW-0354">Hemolysis</keyword>
<keyword id="KW-0442">Lipid degradation</keyword>
<keyword id="KW-0443">Lipid metabolism</keyword>
<keyword id="KW-0456">Lyase</keyword>
<keyword id="KW-0460">Magnesium</keyword>
<keyword id="KW-0479">Metal-binding</keyword>
<keyword id="KW-0964">Secreted</keyword>
<keyword id="KW-0800">Toxin</keyword>
<proteinExistence type="evidence at transcript level"/>
<protein>
    <recommendedName>
        <fullName evidence="7">Dermonecrotic toxin LdSicTox-alphaIB1av</fullName>
        <ecNumber evidence="4">4.6.1.-</ecNumber>
    </recommendedName>
    <alternativeName>
        <fullName>Phospholipase D</fullName>
        <shortName>PLD</shortName>
    </alternativeName>
    <alternativeName>
        <fullName>Sphingomyelin phosphodiesterase D</fullName>
        <shortName>SMD</shortName>
        <shortName>SMase D</shortName>
        <shortName>Sphingomyelinase D</shortName>
    </alternativeName>
</protein>
<name>A1KA5_LOXDE</name>
<sequence length="273" mass="30525">WIMGHMVNAIAQIDEFVNLGANSIETDVSFDDSANPEYTYHGVPCDCGRTCTKWEYFNEFLKGLRKATTPGDSKYHEKLVLVVFDLKTSSLYDNQASDAGKKLAKSLLQNYWNNGNNGGRAYIVLSIPNLAHYKLTTGFKETLTSEGHPELMDKVGYDFSGNDEIGDVAKTYKKAGVTGHVWQSDGITNCLLRGLDRVRKAVANRDSSNGYINKVHYWTVDKRATTRDALDAGVDGIMTNYPDVIADVLNESAYKAKFRIASYDDNPWETFKN</sequence>
<evidence type="ECO:0000250" key="1">
    <source>
        <dbReference type="UniProtKB" id="A0A0D4WTV1"/>
    </source>
</evidence>
<evidence type="ECO:0000250" key="2">
    <source>
        <dbReference type="UniProtKB" id="A0A0D4WV12"/>
    </source>
</evidence>
<evidence type="ECO:0000250" key="3">
    <source>
        <dbReference type="UniProtKB" id="P0CE80"/>
    </source>
</evidence>
<evidence type="ECO:0000250" key="4">
    <source>
        <dbReference type="UniProtKB" id="Q4ZFU2"/>
    </source>
</evidence>
<evidence type="ECO:0000250" key="5">
    <source>
        <dbReference type="UniProtKB" id="Q8I914"/>
    </source>
</evidence>
<evidence type="ECO:0000255" key="6"/>
<evidence type="ECO:0000303" key="7">
    <source>
    </source>
</evidence>
<evidence type="ECO:0000305" key="8"/>
<evidence type="ECO:0000305" key="9">
    <source>
    </source>
</evidence>
<comment type="function">
    <text evidence="1 3">Dermonecrotic toxins cleave the phosphodiester linkage between the phosphate and headgroup of certain phospholipids (sphingolipid and lysolipid substrates), forming an alcohol (often choline) and a cyclic phosphate (By similarity). This toxin acts on sphingomyelin (SM) (By similarity). It may also act on ceramide phosphoethanolamine (CPE), lysophosphatidylcholine (LPC) and lysophosphatidylethanolamine (LPE), but not on lysophosphatidylserine (LPS), and lysophosphatidylglycerol (LPG) (By similarity). It acts by transphosphatidylation, releasing exclusively cyclic phosphate products as second products (By similarity). Induces dermonecrosis, hemolysis, increased vascular permeability, edema, inflammatory response, and platelet aggregation (By similarity).</text>
</comment>
<comment type="catalytic activity">
    <reaction evidence="1">
        <text>an N-(acyl)-sphingosylphosphocholine = an N-(acyl)-sphingosyl-1,3-cyclic phosphate + choline</text>
        <dbReference type="Rhea" id="RHEA:60652"/>
        <dbReference type="ChEBI" id="CHEBI:15354"/>
        <dbReference type="ChEBI" id="CHEBI:64583"/>
        <dbReference type="ChEBI" id="CHEBI:143892"/>
    </reaction>
</comment>
<comment type="catalytic activity">
    <reaction evidence="1">
        <text>an N-(acyl)-sphingosylphosphoethanolamine = an N-(acyl)-sphingosyl-1,3-cyclic phosphate + ethanolamine</text>
        <dbReference type="Rhea" id="RHEA:60648"/>
        <dbReference type="ChEBI" id="CHEBI:57603"/>
        <dbReference type="ChEBI" id="CHEBI:143891"/>
        <dbReference type="ChEBI" id="CHEBI:143892"/>
    </reaction>
</comment>
<comment type="catalytic activity">
    <reaction evidence="1">
        <text>a 1-acyl-sn-glycero-3-phosphocholine = a 1-acyl-sn-glycero-2,3-cyclic phosphate + choline</text>
        <dbReference type="Rhea" id="RHEA:60700"/>
        <dbReference type="ChEBI" id="CHEBI:15354"/>
        <dbReference type="ChEBI" id="CHEBI:58168"/>
        <dbReference type="ChEBI" id="CHEBI:143947"/>
    </reaction>
</comment>
<comment type="catalytic activity">
    <reaction evidence="1">
        <text>a 1-acyl-sn-glycero-3-phosphoethanolamine = a 1-acyl-sn-glycero-2,3-cyclic phosphate + ethanolamine</text>
        <dbReference type="Rhea" id="RHEA:60704"/>
        <dbReference type="ChEBI" id="CHEBI:57603"/>
        <dbReference type="ChEBI" id="CHEBI:64381"/>
        <dbReference type="ChEBI" id="CHEBI:143947"/>
    </reaction>
</comment>
<comment type="cofactor">
    <cofactor evidence="5">
        <name>Mg(2+)</name>
        <dbReference type="ChEBI" id="CHEBI:18420"/>
    </cofactor>
    <text evidence="5">Binds 1 Mg(2+) ion per subunit.</text>
</comment>
<comment type="subcellular location">
    <subcellularLocation>
        <location evidence="9">Secreted</location>
    </subcellularLocation>
</comment>
<comment type="tissue specificity">
    <text evidence="9">Expressed by the venom gland.</text>
</comment>
<comment type="similarity">
    <text evidence="8">Belongs to the arthropod phospholipase D family. Class II subfamily.</text>
</comment>
<comment type="caution">
    <text evidence="1 2 4">The most common activity assay for dermonecrotic toxins detects enzymatic activity by monitoring choline release from substrate. Liberation of choline from sphingomyelin (SM) or lysophosphatidylcholine (LPC) is commonly assumed to result from substrate hydrolysis, giving either ceramide-1-phosphate (C1P) or lysophosphatidic acid (LPA), respectively, as a second product. However, two studies from Lajoie and colleagues (2013 and 2015) report the observation of exclusive formation of cyclic phosphate products as second products, resulting from intramolecular transphosphatidylation. Cyclic phosphates have vastly different biological properties from their monoester counterparts, and they may be relevant to the pathology of brown spider envenomation.</text>
</comment>
<accession>C0JAX0</accession>
<dbReference type="EC" id="4.6.1.-" evidence="4"/>
<dbReference type="EMBL" id="FJ171405">
    <property type="protein sequence ID" value="ACN48901.1"/>
    <property type="molecule type" value="mRNA"/>
</dbReference>
<dbReference type="SMR" id="C0JAX0"/>
<dbReference type="GO" id="GO:0005576">
    <property type="term" value="C:extracellular region"/>
    <property type="evidence" value="ECO:0007669"/>
    <property type="project" value="UniProtKB-SubCell"/>
</dbReference>
<dbReference type="GO" id="GO:0016829">
    <property type="term" value="F:lyase activity"/>
    <property type="evidence" value="ECO:0007669"/>
    <property type="project" value="UniProtKB-KW"/>
</dbReference>
<dbReference type="GO" id="GO:0046872">
    <property type="term" value="F:metal ion binding"/>
    <property type="evidence" value="ECO:0007669"/>
    <property type="project" value="UniProtKB-KW"/>
</dbReference>
<dbReference type="GO" id="GO:0008081">
    <property type="term" value="F:phosphoric diester hydrolase activity"/>
    <property type="evidence" value="ECO:0007669"/>
    <property type="project" value="InterPro"/>
</dbReference>
<dbReference type="GO" id="GO:0090729">
    <property type="term" value="F:toxin activity"/>
    <property type="evidence" value="ECO:0007669"/>
    <property type="project" value="UniProtKB-KW"/>
</dbReference>
<dbReference type="GO" id="GO:0031640">
    <property type="term" value="P:killing of cells of another organism"/>
    <property type="evidence" value="ECO:0007669"/>
    <property type="project" value="UniProtKB-KW"/>
</dbReference>
<dbReference type="GO" id="GO:0016042">
    <property type="term" value="P:lipid catabolic process"/>
    <property type="evidence" value="ECO:0007669"/>
    <property type="project" value="UniProtKB-KW"/>
</dbReference>
<dbReference type="CDD" id="cd08576">
    <property type="entry name" value="GDPD_like_SMaseD_PLD"/>
    <property type="match status" value="1"/>
</dbReference>
<dbReference type="Gene3D" id="3.20.20.190">
    <property type="entry name" value="Phosphatidylinositol (PI) phosphodiesterase"/>
    <property type="match status" value="1"/>
</dbReference>
<dbReference type="InterPro" id="IPR017946">
    <property type="entry name" value="PLC-like_Pdiesterase_TIM-brl"/>
</dbReference>
<dbReference type="Pfam" id="PF13653">
    <property type="entry name" value="GDPD_2"/>
    <property type="match status" value="1"/>
</dbReference>
<dbReference type="SUPFAM" id="SSF51695">
    <property type="entry name" value="PLC-like phosphodiesterases"/>
    <property type="match status" value="1"/>
</dbReference>